<accession>Q2PG46</accession>
<sequence>MAAPGKLSTCRLPPLPTIREIIKLFRLQATKQLSQNFLLDLRLTDKIVRKAGNLANAYVYEVGPGPGGITRSILNADVAELLVVEKDTRFIPGLQMLSEAAPGKLRIVHGDVLTFKVEKAFSESLKRPWEDDPPNVHIIGNLPFSVSTPLIIKWLENISCRDGPFVYGRTQMTLTFQKEVAERLAANTGSKQRSRLSVMAQYLCNVRHIFTIPGRAFVPKPEVDVGVVHFTPLIQPKIEQPFKLVEKVVQNVFQFRRKYCHRGLGMLFPEAQRLENTGRLLELADIDPTLRPRQLSISHFKSLCEVYRRMCDEDPQLFAYNFREELRQRKIKKKEKQDDAKSYRL</sequence>
<dbReference type="EC" id="2.1.1.-" evidence="2"/>
<dbReference type="EMBL" id="AB220391">
    <property type="protein sequence ID" value="BAE72924.1"/>
    <property type="molecule type" value="mRNA"/>
</dbReference>
<dbReference type="RefSeq" id="NP_001270403.1">
    <property type="nucleotide sequence ID" value="NM_001283474.1"/>
</dbReference>
<dbReference type="RefSeq" id="XP_015304318.2">
    <property type="nucleotide sequence ID" value="XM_015448832.3"/>
</dbReference>
<dbReference type="SMR" id="Q2PG46"/>
<dbReference type="STRING" id="9541.ENSMFAP00000017700"/>
<dbReference type="Ensembl" id="ENSMFAT00000068242.2">
    <property type="protein sequence ID" value="ENSMFAP00000017700.2"/>
    <property type="gene ID" value="ENSMFAG00000031968.2"/>
</dbReference>
<dbReference type="GeneID" id="102130743"/>
<dbReference type="KEGG" id="mcf:102130743"/>
<dbReference type="CTD" id="51106"/>
<dbReference type="eggNOG" id="KOG0821">
    <property type="taxonomic scope" value="Eukaryota"/>
</dbReference>
<dbReference type="GeneTree" id="ENSGT00950000183142"/>
<dbReference type="Proteomes" id="UP000233100">
    <property type="component" value="Chromosome 4"/>
</dbReference>
<dbReference type="Bgee" id="ENSMFAG00000031968">
    <property type="expression patterns" value="Expressed in thymus and 13 other cell types or tissues"/>
</dbReference>
<dbReference type="GO" id="GO:0042645">
    <property type="term" value="C:mitochondrial nucleoid"/>
    <property type="evidence" value="ECO:0007669"/>
    <property type="project" value="Ensembl"/>
</dbReference>
<dbReference type="GO" id="GO:0003677">
    <property type="term" value="F:DNA binding"/>
    <property type="evidence" value="ECO:0007669"/>
    <property type="project" value="UniProtKB-KW"/>
</dbReference>
<dbReference type="GO" id="GO:0034246">
    <property type="term" value="F:mitochondrial transcription factor activity"/>
    <property type="evidence" value="ECO:0007669"/>
    <property type="project" value="TreeGrafter"/>
</dbReference>
<dbReference type="GO" id="GO:0003723">
    <property type="term" value="F:RNA binding"/>
    <property type="evidence" value="ECO:0007669"/>
    <property type="project" value="UniProtKB-KW"/>
</dbReference>
<dbReference type="GO" id="GO:0000179">
    <property type="term" value="F:rRNA (adenine-N6,N6-)-dimethyltransferase activity"/>
    <property type="evidence" value="ECO:0000250"/>
    <property type="project" value="UniProtKB"/>
</dbReference>
<dbReference type="GO" id="GO:1904047">
    <property type="term" value="F:S-adenosyl-L-methionine binding"/>
    <property type="evidence" value="ECO:0000250"/>
    <property type="project" value="UniProtKB"/>
</dbReference>
<dbReference type="GO" id="GO:0031167">
    <property type="term" value="P:rRNA methylation"/>
    <property type="evidence" value="ECO:0000250"/>
    <property type="project" value="UniProtKB"/>
</dbReference>
<dbReference type="GO" id="GO:0006391">
    <property type="term" value="P:transcription initiation at mitochondrial promoter"/>
    <property type="evidence" value="ECO:0007669"/>
    <property type="project" value="TreeGrafter"/>
</dbReference>
<dbReference type="CDD" id="cd02440">
    <property type="entry name" value="AdoMet_MTases"/>
    <property type="match status" value="1"/>
</dbReference>
<dbReference type="FunFam" id="1.10.8.100:FF:000004">
    <property type="entry name" value="rRNA adenine N(6)-methyltransferase"/>
    <property type="match status" value="1"/>
</dbReference>
<dbReference type="FunFam" id="3.40.50.150:FF:000109">
    <property type="entry name" value="rRNA adenine N(6)-methyltransferase"/>
    <property type="match status" value="1"/>
</dbReference>
<dbReference type="Gene3D" id="1.10.8.100">
    <property type="entry name" value="Ribosomal RNA adenine dimethylase-like, domain 2"/>
    <property type="match status" value="1"/>
</dbReference>
<dbReference type="Gene3D" id="3.40.50.150">
    <property type="entry name" value="Vaccinia Virus protein VP39"/>
    <property type="match status" value="1"/>
</dbReference>
<dbReference type="InterPro" id="IPR001737">
    <property type="entry name" value="KsgA/Erm"/>
</dbReference>
<dbReference type="InterPro" id="IPR023165">
    <property type="entry name" value="rRNA_Ade_diMease-like_C"/>
</dbReference>
<dbReference type="InterPro" id="IPR020596">
    <property type="entry name" value="rRNA_Ade_Mease_Trfase_CS"/>
</dbReference>
<dbReference type="InterPro" id="IPR020598">
    <property type="entry name" value="rRNA_Ade_methylase_Trfase_N"/>
</dbReference>
<dbReference type="InterPro" id="IPR011530">
    <property type="entry name" value="rRNA_adenine_dimethylase"/>
</dbReference>
<dbReference type="InterPro" id="IPR029063">
    <property type="entry name" value="SAM-dependent_MTases_sf"/>
</dbReference>
<dbReference type="NCBIfam" id="TIGR00755">
    <property type="entry name" value="ksgA"/>
    <property type="match status" value="1"/>
</dbReference>
<dbReference type="PANTHER" id="PTHR11727">
    <property type="entry name" value="DIMETHYLADENOSINE TRANSFERASE"/>
    <property type="match status" value="1"/>
</dbReference>
<dbReference type="PANTHER" id="PTHR11727:SF17">
    <property type="entry name" value="DIMETHYLADENOSINE TRANSFERASE 1, MITOCHONDRIAL"/>
    <property type="match status" value="1"/>
</dbReference>
<dbReference type="Pfam" id="PF00398">
    <property type="entry name" value="RrnaAD"/>
    <property type="match status" value="1"/>
</dbReference>
<dbReference type="SMART" id="SM00650">
    <property type="entry name" value="rADc"/>
    <property type="match status" value="1"/>
</dbReference>
<dbReference type="SUPFAM" id="SSF53335">
    <property type="entry name" value="S-adenosyl-L-methionine-dependent methyltransferases"/>
    <property type="match status" value="1"/>
</dbReference>
<dbReference type="PROSITE" id="PS01131">
    <property type="entry name" value="RRNA_A_DIMETH"/>
    <property type="match status" value="1"/>
</dbReference>
<dbReference type="PROSITE" id="PS51689">
    <property type="entry name" value="SAM_RNA_A_N6_MT"/>
    <property type="match status" value="1"/>
</dbReference>
<name>TFB1M_MACFA</name>
<gene>
    <name type="primary">TFB1M</name>
    <name type="ORF">QccE-11267</name>
</gene>
<reference key="1">
    <citation type="submission" date="2005-07" db="EMBL/GenBank/DDBJ databases">
        <title>Isolation of full-length cDNA clones from macaque brain cDNA libraries.</title>
        <authorList>
            <person name="Osada N."/>
            <person name="Hida M."/>
            <person name="Kusuda J."/>
            <person name="Tanuma R."/>
            <person name="Iseki K."/>
            <person name="Hirai M."/>
            <person name="Terao K."/>
            <person name="Suzuki Y."/>
            <person name="Sugano S."/>
            <person name="Hashimoto K."/>
        </authorList>
    </citation>
    <scope>NUCLEOTIDE SEQUENCE [LARGE SCALE MRNA]</scope>
    <source>
        <tissue>Brain cortex</tissue>
    </source>
</reference>
<organism>
    <name type="scientific">Macaca fascicularis</name>
    <name type="common">Crab-eating macaque</name>
    <name type="synonym">Cynomolgus monkey</name>
    <dbReference type="NCBI Taxonomy" id="9541"/>
    <lineage>
        <taxon>Eukaryota</taxon>
        <taxon>Metazoa</taxon>
        <taxon>Chordata</taxon>
        <taxon>Craniata</taxon>
        <taxon>Vertebrata</taxon>
        <taxon>Euteleostomi</taxon>
        <taxon>Mammalia</taxon>
        <taxon>Eutheria</taxon>
        <taxon>Euarchontoglires</taxon>
        <taxon>Primates</taxon>
        <taxon>Haplorrhini</taxon>
        <taxon>Catarrhini</taxon>
        <taxon>Cercopithecidae</taxon>
        <taxon>Cercopithecinae</taxon>
        <taxon>Macaca</taxon>
    </lineage>
</organism>
<protein>
    <recommendedName>
        <fullName>Dimethyladenosine transferase 1, mitochondrial</fullName>
        <ecNumber evidence="2">2.1.1.-</ecNumber>
    </recommendedName>
    <alternativeName>
        <fullName>Mitochondrial 12S rRNA dimethylase 1</fullName>
    </alternativeName>
    <alternativeName>
        <fullName>Mitochondrial transcription factor B1</fullName>
        <shortName>mtTFB1</shortName>
    </alternativeName>
    <alternativeName>
        <fullName>S-adenosylmethionine-6-N', N'-adenosyl(rRNA) dimethyltransferase 1</fullName>
    </alternativeName>
</protein>
<keyword id="KW-0238">DNA-binding</keyword>
<keyword id="KW-0489">Methyltransferase</keyword>
<keyword id="KW-0496">Mitochondrion</keyword>
<keyword id="KW-1185">Reference proteome</keyword>
<keyword id="KW-0694">RNA-binding</keyword>
<keyword id="KW-0698">rRNA processing</keyword>
<keyword id="KW-0949">S-adenosyl-L-methionine</keyword>
<keyword id="KW-0804">Transcription</keyword>
<keyword id="KW-0805">Transcription regulation</keyword>
<keyword id="KW-0808">Transferase</keyword>
<keyword id="KW-0809">Transit peptide</keyword>
<comment type="function">
    <text evidence="2">Mitochondrial methyltransferase which uses S-adenosyl methionine to dimethylate two highly conserved adjacent adenosine residues (A1583 and A1584) within the loop of helix 45 at the 3-prime end of 12S rRNA, thereby regulating the assembly or stability of the small subunit of the mitochondrial ribosome. Also required for basal transcription of mitochondrial DNA, probably via its interaction with POLRMT and TFAM. Stimulates transcription independently of the methyltransferase activity.</text>
</comment>
<comment type="catalytic activity">
    <reaction evidence="2">
        <text>adenosine(N)/adenosine(N+1) in rRNA + 4 S-adenosyl-L-methionine = N(6)-dimethyladenosine(N)/N(6)-dimethyladenosine(N+1) in rRNA + 4 S-adenosyl-L-homocysteine + 4 H(+)</text>
        <dbReference type="Rhea" id="RHEA:78527"/>
        <dbReference type="Rhea" id="RHEA-COMP:19105"/>
        <dbReference type="Rhea" id="RHEA-COMP:19106"/>
        <dbReference type="ChEBI" id="CHEBI:15378"/>
        <dbReference type="ChEBI" id="CHEBI:57856"/>
        <dbReference type="ChEBI" id="CHEBI:59789"/>
        <dbReference type="ChEBI" id="CHEBI:74411"/>
        <dbReference type="ChEBI" id="CHEBI:74493"/>
    </reaction>
</comment>
<comment type="subunit">
    <text evidence="1 2">Interacts with mitochondrial RNA polymerase POLRMT. Interacts with TFAM (By similarity). Bound to the maturing mtSSU until the late stages of assembly (By similarity).</text>
</comment>
<comment type="subcellular location">
    <subcellularLocation>
        <location evidence="2">Mitochondrion</location>
    </subcellularLocation>
</comment>
<comment type="similarity">
    <text evidence="4">Belongs to the class I-like SAM-binding methyltransferase superfamily. rRNA adenine N(6)-methyltransferase family. KsgA subfamily.</text>
</comment>
<feature type="transit peptide" description="Mitochondrion" evidence="3">
    <location>
        <begin position="1"/>
        <end position="27"/>
    </location>
</feature>
<feature type="chain" id="PRO_0000273172" description="Dimethyladenosine transferase 1, mitochondrial">
    <location>
        <begin position="28"/>
        <end position="345"/>
    </location>
</feature>
<feature type="binding site" evidence="4">
    <location>
        <position position="38"/>
    </location>
    <ligand>
        <name>S-adenosyl-L-methionine</name>
        <dbReference type="ChEBI" id="CHEBI:59789"/>
    </ligand>
</feature>
<feature type="binding site" evidence="2">
    <location>
        <position position="63"/>
    </location>
    <ligand>
        <name>S-adenosyl-L-methionine</name>
        <dbReference type="ChEBI" id="CHEBI:59789"/>
    </ligand>
</feature>
<feature type="binding site" evidence="4">
    <location>
        <position position="85"/>
    </location>
    <ligand>
        <name>S-adenosyl-L-methionine</name>
        <dbReference type="ChEBI" id="CHEBI:59789"/>
    </ligand>
</feature>
<feature type="binding site" evidence="1">
    <location>
        <position position="86"/>
    </location>
    <ligand>
        <name>S-adenosyl-L-methionine</name>
        <dbReference type="ChEBI" id="CHEBI:59789"/>
    </ligand>
</feature>
<feature type="binding site" evidence="4">
    <location>
        <position position="111"/>
    </location>
    <ligand>
        <name>S-adenosyl-L-methionine</name>
        <dbReference type="ChEBI" id="CHEBI:59789"/>
    </ligand>
</feature>
<feature type="binding site" evidence="1">
    <location>
        <position position="112"/>
    </location>
    <ligand>
        <name>S-adenosyl-L-methionine</name>
        <dbReference type="ChEBI" id="CHEBI:59789"/>
    </ligand>
</feature>
<feature type="binding site" evidence="4">
    <location>
        <position position="141"/>
    </location>
    <ligand>
        <name>S-adenosyl-L-methionine</name>
        <dbReference type="ChEBI" id="CHEBI:59789"/>
    </ligand>
</feature>
<proteinExistence type="evidence at transcript level"/>
<evidence type="ECO:0000250" key="1">
    <source>
        <dbReference type="UniProtKB" id="Q8JZM0"/>
    </source>
</evidence>
<evidence type="ECO:0000250" key="2">
    <source>
        <dbReference type="UniProtKB" id="Q8WVM0"/>
    </source>
</evidence>
<evidence type="ECO:0000255" key="3"/>
<evidence type="ECO:0000255" key="4">
    <source>
        <dbReference type="PROSITE-ProRule" id="PRU01026"/>
    </source>
</evidence>